<accession>Q2G469</accession>
<name>HIS1_NOVAD</name>
<feature type="chain" id="PRO_0000319530" description="ATP phosphoribosyltransferase">
    <location>
        <begin position="1"/>
        <end position="223"/>
    </location>
</feature>
<protein>
    <recommendedName>
        <fullName evidence="1">ATP phosphoribosyltransferase</fullName>
        <shortName evidence="1">ATP-PRT</shortName>
        <shortName evidence="1">ATP-PRTase</shortName>
        <ecNumber evidence="1">2.4.2.17</ecNumber>
    </recommendedName>
</protein>
<keyword id="KW-0028">Amino-acid biosynthesis</keyword>
<keyword id="KW-0067">ATP-binding</keyword>
<keyword id="KW-0963">Cytoplasm</keyword>
<keyword id="KW-0328">Glycosyltransferase</keyword>
<keyword id="KW-0368">Histidine biosynthesis</keyword>
<keyword id="KW-0547">Nucleotide-binding</keyword>
<keyword id="KW-1185">Reference proteome</keyword>
<keyword id="KW-0808">Transferase</keyword>
<organism>
    <name type="scientific">Novosphingobium aromaticivorans (strain ATCC 700278 / DSM 12444 / CCUG 56034 / CIP 105152 / NBRC 16084 / F199)</name>
    <dbReference type="NCBI Taxonomy" id="279238"/>
    <lineage>
        <taxon>Bacteria</taxon>
        <taxon>Pseudomonadati</taxon>
        <taxon>Pseudomonadota</taxon>
        <taxon>Alphaproteobacteria</taxon>
        <taxon>Sphingomonadales</taxon>
        <taxon>Sphingomonadaceae</taxon>
        <taxon>Novosphingobium</taxon>
    </lineage>
</organism>
<sequence>MSTAAPLVFALPKGRILDEALPLLEKAGIVPEAEFFDKSSRALSFATNRPDVKIIRVRAFDVATFVAHGAAHAGIVGSDVIDEFDYADLYAPVDLDIGHCRLSVAEPVSMVESGANARESHARVATKYPNLTRRHFEKLGVQAEVVKLNGAMELAPSLGLASRIVDLVSTGRTLKENGLVETSRILPVSARLIVNRAALKTDSARLGALVDAFRAMVAAKDAA</sequence>
<reference key="1">
    <citation type="submission" date="2006-01" db="EMBL/GenBank/DDBJ databases">
        <title>Complete sequence of Novosphingobium aromaticivorans DSM 12444.</title>
        <authorList>
            <consortium name="US DOE Joint Genome Institute"/>
            <person name="Copeland A."/>
            <person name="Lucas S."/>
            <person name="Lapidus A."/>
            <person name="Barry K."/>
            <person name="Detter J.C."/>
            <person name="Glavina T."/>
            <person name="Hammon N."/>
            <person name="Israni S."/>
            <person name="Pitluck S."/>
            <person name="Chain P."/>
            <person name="Malfatti S."/>
            <person name="Shin M."/>
            <person name="Vergez L."/>
            <person name="Schmutz J."/>
            <person name="Larimer F."/>
            <person name="Land M."/>
            <person name="Kyrpides N."/>
            <person name="Ivanova N."/>
            <person name="Fredrickson J."/>
            <person name="Balkwill D."/>
            <person name="Romine M.F."/>
            <person name="Richardson P."/>
        </authorList>
    </citation>
    <scope>NUCLEOTIDE SEQUENCE [LARGE SCALE GENOMIC DNA]</scope>
    <source>
        <strain>ATCC 700278 / DSM 12444 / CCUG 56034 / CIP 105152 / NBRC 16084 / F199</strain>
    </source>
</reference>
<comment type="function">
    <text evidence="1">Catalyzes the condensation of ATP and 5-phosphoribose 1-diphosphate to form N'-(5'-phosphoribosyl)-ATP (PR-ATP). Has a crucial role in the pathway because the rate of histidine biosynthesis seems to be controlled primarily by regulation of HisG enzymatic activity.</text>
</comment>
<comment type="catalytic activity">
    <reaction evidence="1">
        <text>1-(5-phospho-beta-D-ribosyl)-ATP + diphosphate = 5-phospho-alpha-D-ribose 1-diphosphate + ATP</text>
        <dbReference type="Rhea" id="RHEA:18473"/>
        <dbReference type="ChEBI" id="CHEBI:30616"/>
        <dbReference type="ChEBI" id="CHEBI:33019"/>
        <dbReference type="ChEBI" id="CHEBI:58017"/>
        <dbReference type="ChEBI" id="CHEBI:73183"/>
        <dbReference type="EC" id="2.4.2.17"/>
    </reaction>
</comment>
<comment type="pathway">
    <text evidence="1">Amino-acid biosynthesis; L-histidine biosynthesis; L-histidine from 5-phospho-alpha-D-ribose 1-diphosphate: step 1/9.</text>
</comment>
<comment type="subunit">
    <text evidence="1">Heteromultimer composed of HisG and HisZ subunits.</text>
</comment>
<comment type="subcellular location">
    <subcellularLocation>
        <location evidence="1">Cytoplasm</location>
    </subcellularLocation>
</comment>
<comment type="domain">
    <text>Lacks the C-terminal regulatory region which is replaced by HisZ.</text>
</comment>
<comment type="similarity">
    <text evidence="1">Belongs to the ATP phosphoribosyltransferase family. Short subfamily.</text>
</comment>
<evidence type="ECO:0000255" key="1">
    <source>
        <dbReference type="HAMAP-Rule" id="MF_01018"/>
    </source>
</evidence>
<dbReference type="EC" id="2.4.2.17" evidence="1"/>
<dbReference type="EMBL" id="CP000248">
    <property type="protein sequence ID" value="ABD27354.1"/>
    <property type="molecule type" value="Genomic_DNA"/>
</dbReference>
<dbReference type="RefSeq" id="WP_011446558.1">
    <property type="nucleotide sequence ID" value="NC_007794.1"/>
</dbReference>
<dbReference type="SMR" id="Q2G469"/>
<dbReference type="STRING" id="279238.Saro_2919"/>
<dbReference type="KEGG" id="nar:Saro_2919"/>
<dbReference type="eggNOG" id="COG0040">
    <property type="taxonomic scope" value="Bacteria"/>
</dbReference>
<dbReference type="HOGENOM" id="CLU_038115_2_0_5"/>
<dbReference type="UniPathway" id="UPA00031">
    <property type="reaction ID" value="UER00006"/>
</dbReference>
<dbReference type="Proteomes" id="UP000009134">
    <property type="component" value="Chromosome"/>
</dbReference>
<dbReference type="GO" id="GO:0005737">
    <property type="term" value="C:cytoplasm"/>
    <property type="evidence" value="ECO:0007669"/>
    <property type="project" value="UniProtKB-SubCell"/>
</dbReference>
<dbReference type="GO" id="GO:0005524">
    <property type="term" value="F:ATP binding"/>
    <property type="evidence" value="ECO:0007669"/>
    <property type="project" value="UniProtKB-KW"/>
</dbReference>
<dbReference type="GO" id="GO:0003879">
    <property type="term" value="F:ATP phosphoribosyltransferase activity"/>
    <property type="evidence" value="ECO:0007669"/>
    <property type="project" value="UniProtKB-UniRule"/>
</dbReference>
<dbReference type="GO" id="GO:0000105">
    <property type="term" value="P:L-histidine biosynthetic process"/>
    <property type="evidence" value="ECO:0007669"/>
    <property type="project" value="UniProtKB-UniRule"/>
</dbReference>
<dbReference type="CDD" id="cd13595">
    <property type="entry name" value="PBP2_HisGs"/>
    <property type="match status" value="1"/>
</dbReference>
<dbReference type="FunFam" id="3.40.190.10:FF:000008">
    <property type="entry name" value="ATP phosphoribosyltransferase"/>
    <property type="match status" value="1"/>
</dbReference>
<dbReference type="Gene3D" id="3.40.190.10">
    <property type="entry name" value="Periplasmic binding protein-like II"/>
    <property type="match status" value="2"/>
</dbReference>
<dbReference type="HAMAP" id="MF_01018">
    <property type="entry name" value="HisG_Short"/>
    <property type="match status" value="1"/>
</dbReference>
<dbReference type="InterPro" id="IPR013820">
    <property type="entry name" value="ATP_PRibTrfase_cat"/>
</dbReference>
<dbReference type="InterPro" id="IPR018198">
    <property type="entry name" value="ATP_PRibTrfase_CS"/>
</dbReference>
<dbReference type="InterPro" id="IPR001348">
    <property type="entry name" value="ATP_PRibTrfase_HisG"/>
</dbReference>
<dbReference type="InterPro" id="IPR024893">
    <property type="entry name" value="ATP_PRibTrfase_HisG_short"/>
</dbReference>
<dbReference type="NCBIfam" id="TIGR00070">
    <property type="entry name" value="hisG"/>
    <property type="match status" value="1"/>
</dbReference>
<dbReference type="PANTHER" id="PTHR21403:SF8">
    <property type="entry name" value="ATP PHOSPHORIBOSYLTRANSFERASE"/>
    <property type="match status" value="1"/>
</dbReference>
<dbReference type="PANTHER" id="PTHR21403">
    <property type="entry name" value="ATP PHOSPHORIBOSYLTRANSFERASE ATP-PRTASE"/>
    <property type="match status" value="1"/>
</dbReference>
<dbReference type="Pfam" id="PF01634">
    <property type="entry name" value="HisG"/>
    <property type="match status" value="1"/>
</dbReference>
<dbReference type="SUPFAM" id="SSF53850">
    <property type="entry name" value="Periplasmic binding protein-like II"/>
    <property type="match status" value="1"/>
</dbReference>
<dbReference type="PROSITE" id="PS01316">
    <property type="entry name" value="ATP_P_PHORIBOSYLTR"/>
    <property type="match status" value="1"/>
</dbReference>
<gene>
    <name evidence="1" type="primary">hisG</name>
    <name type="ordered locus">Saro_2919</name>
</gene>
<proteinExistence type="inferred from homology"/>